<reference key="1">
    <citation type="journal article" date="2004" name="Proc. Natl. Acad. Sci. U.S.A.">
        <title>The diploid genome sequence of Candida albicans.</title>
        <authorList>
            <person name="Jones T."/>
            <person name="Federspiel N.A."/>
            <person name="Chibana H."/>
            <person name="Dungan J."/>
            <person name="Kalman S."/>
            <person name="Magee B.B."/>
            <person name="Newport G."/>
            <person name="Thorstenson Y.R."/>
            <person name="Agabian N."/>
            <person name="Magee P.T."/>
            <person name="Davis R.W."/>
            <person name="Scherer S."/>
        </authorList>
    </citation>
    <scope>NUCLEOTIDE SEQUENCE [LARGE SCALE GENOMIC DNA]</scope>
    <source>
        <strain>SC5314 / ATCC MYA-2876</strain>
    </source>
</reference>
<reference key="2">
    <citation type="journal article" date="2007" name="Genome Biol.">
        <title>Assembly of the Candida albicans genome into sixteen supercontigs aligned on the eight chromosomes.</title>
        <authorList>
            <person name="van het Hoog M."/>
            <person name="Rast T.J."/>
            <person name="Martchenko M."/>
            <person name="Grindle S."/>
            <person name="Dignard D."/>
            <person name="Hogues H."/>
            <person name="Cuomo C."/>
            <person name="Berriman M."/>
            <person name="Scherer S."/>
            <person name="Magee B.B."/>
            <person name="Whiteway M."/>
            <person name="Chibana H."/>
            <person name="Nantel A."/>
            <person name="Magee P.T."/>
        </authorList>
    </citation>
    <scope>GENOME REANNOTATION</scope>
    <source>
        <strain>SC5314 / ATCC MYA-2876</strain>
    </source>
</reference>
<reference key="3">
    <citation type="journal article" date="2013" name="Genome Biol.">
        <title>Assembly of a phased diploid Candida albicans genome facilitates allele-specific measurements and provides a simple model for repeat and indel structure.</title>
        <authorList>
            <person name="Muzzey D."/>
            <person name="Schwartz K."/>
            <person name="Weissman J.S."/>
            <person name="Sherlock G."/>
        </authorList>
    </citation>
    <scope>NUCLEOTIDE SEQUENCE [LARGE SCALE GENOMIC DNA]</scope>
    <scope>GENOME REANNOTATION</scope>
    <source>
        <strain>SC5314 / ATCC MYA-2876</strain>
    </source>
</reference>
<protein>
    <recommendedName>
        <fullName>DNA-directed RNA polymerase III subunit RPC3</fullName>
        <shortName>RNA polymerase III subunit C3</shortName>
    </recommendedName>
</protein>
<sequence>MDEVQMETARIQSPKSYLYTTLATTHLGEIASCIISILISNGRLTAREISNRTKIPTKNIKSALVSLIQLNCIYYWQEEKDRKFYYSLKETGLLLFVYSGDIINHIKRQYGEDEAEIIQNILIHGHVKIEDYLTQFNHDKSMKIDQENKFLKLFNDNWLIKLQDYHFHSLDDIWHKIFEECLKDTPRSSVTSEIKRVAEAQAKAKVKLNTLLESGTTGGGDIFTEVNGMKKLKPDLVVTFNLSRFQKHLRTNAFVNMVRSKIGVLTAIVYDAALRYIENKSPPMDYPLLDIPGLINDPKDVKEYILSIENKLVNEKKITFSARDIQRLLPKDIDFKNSVITPTFAKPKRPLENGSSPTLKKIKLEDGIASSTSTSTSTSSSTSSNGTSIDLNTLEQHLKLLLNGTNTAFVNEISPGNYTIPFSHLTNILKQNNFEALVKATLGDYAFRILRCVKSMKLCDEKSICNGALLKEKTVRSELYHLIKANIIEIQEVPRSADRAASKTFYLFRHKSNSNFNYLKNCLIYDMAEILNRIQDFKLEHKILLEKYKLVEGQEDQYLLDRELKLLNDLQLREIKNLVKFQRIKSLYSLYSLVD</sequence>
<proteinExistence type="inferred from homology"/>
<name>RPC3_CANAL</name>
<feature type="chain" id="PRO_0000351029" description="DNA-directed RNA polymerase III subunit RPC3">
    <location>
        <begin position="1"/>
        <end position="595"/>
    </location>
</feature>
<feature type="region of interest" description="Leucine-zipper">
    <location>
        <begin position="523"/>
        <end position="544"/>
    </location>
</feature>
<comment type="function">
    <text evidence="1">DNA-dependent RNA polymerase catalyzes the transcription of DNA into RNA using the four ribonucleoside triphosphates as substrates. Specific core component of RNA polymerase III which synthesizes small RNAs, such as 5S rRNA and tRNAs (By similarity).</text>
</comment>
<comment type="subunit">
    <text evidence="1">Component of the RNA polymerase III (Pol III) complex consisting of 17 subunits.</text>
</comment>
<comment type="subcellular location">
    <subcellularLocation>
        <location evidence="1">Nucleus</location>
    </subcellularLocation>
</comment>
<comment type="similarity">
    <text evidence="2">Belongs to the RNA polymerase beta chain family.</text>
</comment>
<organism>
    <name type="scientific">Candida albicans (strain SC5314 / ATCC MYA-2876)</name>
    <name type="common">Yeast</name>
    <dbReference type="NCBI Taxonomy" id="237561"/>
    <lineage>
        <taxon>Eukaryota</taxon>
        <taxon>Fungi</taxon>
        <taxon>Dikarya</taxon>
        <taxon>Ascomycota</taxon>
        <taxon>Saccharomycotina</taxon>
        <taxon>Pichiomycetes</taxon>
        <taxon>Debaryomycetaceae</taxon>
        <taxon>Candida/Lodderomyces clade</taxon>
        <taxon>Candida</taxon>
    </lineage>
</organism>
<evidence type="ECO:0000250" key="1"/>
<evidence type="ECO:0000305" key="2"/>
<dbReference type="EMBL" id="CP017630">
    <property type="protein sequence ID" value="AOW31029.1"/>
    <property type="molecule type" value="Genomic_DNA"/>
</dbReference>
<dbReference type="RefSeq" id="XP_715778.2">
    <property type="nucleotide sequence ID" value="XM_710685.2"/>
</dbReference>
<dbReference type="SMR" id="Q5A246"/>
<dbReference type="FunCoup" id="Q5A246">
    <property type="interactions" value="538"/>
</dbReference>
<dbReference type="STRING" id="237561.Q5A246"/>
<dbReference type="EnsemblFungi" id="CR_02890C_A-T">
    <property type="protein sequence ID" value="CR_02890C_A-T-p1"/>
    <property type="gene ID" value="CR_02890C_A"/>
</dbReference>
<dbReference type="GeneID" id="3642585"/>
<dbReference type="KEGG" id="cal:CAALFM_CR02890CA"/>
<dbReference type="CGD" id="CAL0000174854">
    <property type="gene designation" value="orf19.10366"/>
</dbReference>
<dbReference type="VEuPathDB" id="FungiDB:CR_02890C_A"/>
<dbReference type="eggNOG" id="KOG2587">
    <property type="taxonomic scope" value="Eukaryota"/>
</dbReference>
<dbReference type="HOGENOM" id="CLU_010734_0_0_1"/>
<dbReference type="InParanoid" id="Q5A246"/>
<dbReference type="OrthoDB" id="272392at2759"/>
<dbReference type="PRO" id="PR:Q5A246"/>
<dbReference type="Proteomes" id="UP000000559">
    <property type="component" value="Chromosome R"/>
</dbReference>
<dbReference type="GO" id="GO:0005666">
    <property type="term" value="C:RNA polymerase III complex"/>
    <property type="evidence" value="ECO:0000318"/>
    <property type="project" value="GO_Central"/>
</dbReference>
<dbReference type="GO" id="GO:0003899">
    <property type="term" value="F:DNA-directed RNA polymerase activity"/>
    <property type="evidence" value="ECO:0007669"/>
    <property type="project" value="EnsemblFungi"/>
</dbReference>
<dbReference type="GO" id="GO:0003697">
    <property type="term" value="F:single-stranded DNA binding"/>
    <property type="evidence" value="ECO:0007669"/>
    <property type="project" value="InterPro"/>
</dbReference>
<dbReference type="GO" id="GO:0006386">
    <property type="term" value="P:termination of RNA polymerase III transcription"/>
    <property type="evidence" value="ECO:0007669"/>
    <property type="project" value="EnsemblFungi"/>
</dbReference>
<dbReference type="GO" id="GO:0006384">
    <property type="term" value="P:transcription initiation at RNA polymerase III promoter"/>
    <property type="evidence" value="ECO:0007669"/>
    <property type="project" value="EnsemblFungi"/>
</dbReference>
<dbReference type="GO" id="GO:0042797">
    <property type="term" value="P:tRNA transcription by RNA polymerase III"/>
    <property type="evidence" value="ECO:0007669"/>
    <property type="project" value="EnsemblFungi"/>
</dbReference>
<dbReference type="Gene3D" id="1.10.10.10">
    <property type="entry name" value="Winged helix-like DNA-binding domain superfamily/Winged helix DNA-binding domain"/>
    <property type="match status" value="2"/>
</dbReference>
<dbReference type="InterPro" id="IPR055207">
    <property type="entry name" value="POLR3C_WHD"/>
</dbReference>
<dbReference type="InterPro" id="IPR013197">
    <property type="entry name" value="RNA_pol_III_RPC82-rel_HTH"/>
</dbReference>
<dbReference type="InterPro" id="IPR008806">
    <property type="entry name" value="RNA_pol_III_Rpc82_C"/>
</dbReference>
<dbReference type="InterPro" id="IPR039748">
    <property type="entry name" value="RPC3"/>
</dbReference>
<dbReference type="InterPro" id="IPR036388">
    <property type="entry name" value="WH-like_DNA-bd_sf"/>
</dbReference>
<dbReference type="InterPro" id="IPR036390">
    <property type="entry name" value="WH_DNA-bd_sf"/>
</dbReference>
<dbReference type="PANTHER" id="PTHR12949:SF0">
    <property type="entry name" value="DNA-DIRECTED RNA POLYMERASE III SUBUNIT RPC3"/>
    <property type="match status" value="1"/>
</dbReference>
<dbReference type="PANTHER" id="PTHR12949">
    <property type="entry name" value="RNA POLYMERASE III DNA DIRECTED -RELATED"/>
    <property type="match status" value="1"/>
</dbReference>
<dbReference type="Pfam" id="PF08221">
    <property type="entry name" value="HTH_9"/>
    <property type="match status" value="1"/>
</dbReference>
<dbReference type="Pfam" id="PF22536">
    <property type="entry name" value="POLR3C_WHD"/>
    <property type="match status" value="1"/>
</dbReference>
<dbReference type="Pfam" id="PF05645">
    <property type="entry name" value="RNA_pol_Rpc82"/>
    <property type="match status" value="1"/>
</dbReference>
<dbReference type="SUPFAM" id="SSF46785">
    <property type="entry name" value="Winged helix' DNA-binding domain"/>
    <property type="match status" value="1"/>
</dbReference>
<keyword id="KW-0240">DNA-directed RNA polymerase</keyword>
<keyword id="KW-0539">Nucleus</keyword>
<keyword id="KW-1185">Reference proteome</keyword>
<keyword id="KW-0804">Transcription</keyword>
<keyword id="KW-0862">Zinc</keyword>
<accession>Q5A246</accession>
<accession>A0A1D8PSD1</accession>
<accession>Q5A1Z6</accession>
<gene>
    <name type="primary">RPC82</name>
    <name type="synonym">RPC3</name>
    <name type="ordered locus">CAALFM_CR02890CA</name>
    <name type="ORF">CaO19.10366</name>
    <name type="ORF">CaO19.2847</name>
</gene>